<name>MEP7_ARTGP</name>
<reference key="1">
    <citation type="journal article" date="2012" name="MBio">
        <title>Comparative genome analysis of Trichophyton rubrum and related dermatophytes reveals candidate genes involved in infection.</title>
        <authorList>
            <person name="Martinez D.A."/>
            <person name="Oliver B.G."/>
            <person name="Graeser Y."/>
            <person name="Goldberg J.M."/>
            <person name="Li W."/>
            <person name="Martinez-Rossi N.M."/>
            <person name="Monod M."/>
            <person name="Shelest E."/>
            <person name="Barton R.C."/>
            <person name="Birch E."/>
            <person name="Brakhage A.A."/>
            <person name="Chen Z."/>
            <person name="Gurr S.J."/>
            <person name="Heiman D."/>
            <person name="Heitman J."/>
            <person name="Kosti I."/>
            <person name="Rossi A."/>
            <person name="Saif S."/>
            <person name="Samalova M."/>
            <person name="Saunders C.W."/>
            <person name="Shea T."/>
            <person name="Summerbell R.C."/>
            <person name="Xu J."/>
            <person name="Young S."/>
            <person name="Zeng Q."/>
            <person name="Birren B.W."/>
            <person name="Cuomo C.A."/>
            <person name="White T.C."/>
        </authorList>
    </citation>
    <scope>NUCLEOTIDE SEQUENCE [LARGE SCALE GENOMIC DNA]</scope>
    <source>
        <strain>ATCC MYA-4604 / CBS 118893</strain>
    </source>
</reference>
<comment type="function">
    <text evidence="1">Secreted metalloproteinase that allows assimilation of proteinaceous substrates. Plays a pivotal role as a pathogenicity determinant during infections and contributes to the ability of the pathogen to persist within the mammalian host (By similarity).</text>
</comment>
<comment type="subcellular location">
    <subcellularLocation>
        <location evidence="1">Secreted</location>
    </subcellularLocation>
</comment>
<comment type="similarity">
    <text evidence="5">Belongs to the peptidase M43B family.</text>
</comment>
<accession>E5QZI4</accession>
<evidence type="ECO:0000250" key="1"/>
<evidence type="ECO:0000255" key="2"/>
<evidence type="ECO:0000255" key="3">
    <source>
        <dbReference type="PROSITE-ProRule" id="PRU10095"/>
    </source>
</evidence>
<evidence type="ECO:0000256" key="4">
    <source>
        <dbReference type="SAM" id="MobiDB-lite"/>
    </source>
</evidence>
<evidence type="ECO:0000305" key="5"/>
<keyword id="KW-1015">Disulfide bond</keyword>
<keyword id="KW-0325">Glycoprotein</keyword>
<keyword id="KW-0378">Hydrolase</keyword>
<keyword id="KW-0479">Metal-binding</keyword>
<keyword id="KW-0482">Metalloprotease</keyword>
<keyword id="KW-0645">Protease</keyword>
<keyword id="KW-1185">Reference proteome</keyword>
<keyword id="KW-0964">Secreted</keyword>
<keyword id="KW-0732">Signal</keyword>
<keyword id="KW-0843">Virulence</keyword>
<keyword id="KW-0862">Zinc</keyword>
<organism>
    <name type="scientific">Arthroderma gypseum (strain ATCC MYA-4604 / CBS 118893)</name>
    <name type="common">Microsporum gypseum</name>
    <dbReference type="NCBI Taxonomy" id="535722"/>
    <lineage>
        <taxon>Eukaryota</taxon>
        <taxon>Fungi</taxon>
        <taxon>Dikarya</taxon>
        <taxon>Ascomycota</taxon>
        <taxon>Pezizomycotina</taxon>
        <taxon>Eurotiomycetes</taxon>
        <taxon>Eurotiomycetidae</taxon>
        <taxon>Onygenales</taxon>
        <taxon>Arthrodermataceae</taxon>
        <taxon>Nannizzia</taxon>
    </lineage>
</organism>
<sequence>MRFSVFLPAIAALSSAVAAQRSCGSIPHKAFSNELKEAMENSRTSSFSNVTSNVTINTYFHVITDGNTGKISDETLQKQIAVLNSDYKASGFSFKLVASDSVDNPTWAAGEDDMGMKSALRKGGYDTLNVYFVPMLREGLLGFCYFPMKNPSEGQKIKDGCVINSNSVPGGSAQNYNEGKTTTHEVGHFMGLYHVFNEQEGNCQQDGDMIEDTPVQGSASSGCPTGKDSCPQQGVDSIHNYMDYSYDSCLTEFSPGQIKRMQMLWQFRAGSGSGSVTRPRPKPPVLMDYEHRL</sequence>
<dbReference type="EC" id="3.4.24.-"/>
<dbReference type="EMBL" id="DS989822">
    <property type="protein sequence ID" value="EFQ97350.1"/>
    <property type="molecule type" value="Genomic_DNA"/>
</dbReference>
<dbReference type="RefSeq" id="XP_003176302.1">
    <property type="nucleotide sequence ID" value="XM_003176254.1"/>
</dbReference>
<dbReference type="SMR" id="E5QZI4"/>
<dbReference type="STRING" id="535722.E5QZI4"/>
<dbReference type="MEROPS" id="M43.008"/>
<dbReference type="GeneID" id="10031619"/>
<dbReference type="VEuPathDB" id="FungiDB:MGYG_00389"/>
<dbReference type="eggNOG" id="ENOG502S6EM">
    <property type="taxonomic scope" value="Eukaryota"/>
</dbReference>
<dbReference type="HOGENOM" id="CLU_048726_0_0_1"/>
<dbReference type="InParanoid" id="E5QZI4"/>
<dbReference type="OMA" id="ALNTHYA"/>
<dbReference type="OrthoDB" id="536211at2759"/>
<dbReference type="Proteomes" id="UP000002669">
    <property type="component" value="Unassembled WGS sequence"/>
</dbReference>
<dbReference type="GO" id="GO:0005576">
    <property type="term" value="C:extracellular region"/>
    <property type="evidence" value="ECO:0007669"/>
    <property type="project" value="UniProtKB-SubCell"/>
</dbReference>
<dbReference type="GO" id="GO:0046872">
    <property type="term" value="F:metal ion binding"/>
    <property type="evidence" value="ECO:0007669"/>
    <property type="project" value="UniProtKB-KW"/>
</dbReference>
<dbReference type="GO" id="GO:0008237">
    <property type="term" value="F:metallopeptidase activity"/>
    <property type="evidence" value="ECO:0007669"/>
    <property type="project" value="UniProtKB-KW"/>
</dbReference>
<dbReference type="GO" id="GO:0006508">
    <property type="term" value="P:proteolysis"/>
    <property type="evidence" value="ECO:0007669"/>
    <property type="project" value="UniProtKB-KW"/>
</dbReference>
<dbReference type="CDD" id="cd04275">
    <property type="entry name" value="ZnMc_pappalysin_like"/>
    <property type="match status" value="1"/>
</dbReference>
<dbReference type="Gene3D" id="3.40.390.10">
    <property type="entry name" value="Collagenase (Catalytic Domain)"/>
    <property type="match status" value="1"/>
</dbReference>
<dbReference type="InterPro" id="IPR024079">
    <property type="entry name" value="MetalloPept_cat_dom_sf"/>
</dbReference>
<dbReference type="InterPro" id="IPR008754">
    <property type="entry name" value="Peptidase_M43"/>
</dbReference>
<dbReference type="PANTHER" id="PTHR47466">
    <property type="match status" value="1"/>
</dbReference>
<dbReference type="PANTHER" id="PTHR47466:SF1">
    <property type="entry name" value="METALLOPROTEASE MEP1 (AFU_ORTHOLOGUE AFUA_1G07730)-RELATED"/>
    <property type="match status" value="1"/>
</dbReference>
<dbReference type="Pfam" id="PF05572">
    <property type="entry name" value="Peptidase_M43"/>
    <property type="match status" value="1"/>
</dbReference>
<dbReference type="SUPFAM" id="SSF55486">
    <property type="entry name" value="Metalloproteases ('zincins'), catalytic domain"/>
    <property type="match status" value="1"/>
</dbReference>
<dbReference type="PROSITE" id="PS00142">
    <property type="entry name" value="ZINC_PROTEASE"/>
    <property type="match status" value="1"/>
</dbReference>
<protein>
    <recommendedName>
        <fullName>Extracellular metalloprotease MGYG_00389</fullName>
        <ecNumber>3.4.24.-</ecNumber>
    </recommendedName>
</protein>
<proteinExistence type="inferred from homology"/>
<gene>
    <name type="ORF">MGYG_00389</name>
</gene>
<feature type="signal peptide" evidence="2">
    <location>
        <begin position="1"/>
        <end position="19"/>
    </location>
</feature>
<feature type="chain" id="PRO_0000407215" description="Extracellular metalloprotease MGYG_00389">
    <location>
        <begin position="20"/>
        <end position="293"/>
    </location>
</feature>
<feature type="region of interest" description="Disordered" evidence="4">
    <location>
        <begin position="270"/>
        <end position="293"/>
    </location>
</feature>
<feature type="active site" evidence="3">
    <location>
        <position position="185"/>
    </location>
</feature>
<feature type="binding site" evidence="3">
    <location>
        <position position="184"/>
    </location>
    <ligand>
        <name>Zn(2+)</name>
        <dbReference type="ChEBI" id="CHEBI:29105"/>
        <note>catalytic</note>
    </ligand>
</feature>
<feature type="binding site" evidence="3">
    <location>
        <position position="188"/>
    </location>
    <ligand>
        <name>Zn(2+)</name>
        <dbReference type="ChEBI" id="CHEBI:29105"/>
        <note>catalytic</note>
    </ligand>
</feature>
<feature type="glycosylation site" description="N-linked (GlcNAc...) asparagine" evidence="2">
    <location>
        <position position="49"/>
    </location>
</feature>
<feature type="glycosylation site" description="N-linked (GlcNAc...) asparagine" evidence="2">
    <location>
        <position position="53"/>
    </location>
</feature>
<feature type="disulfide bond" evidence="1">
    <location>
        <begin position="223"/>
        <end position="249"/>
    </location>
</feature>